<name>MRAZ_SYNFM</name>
<evidence type="ECO:0000255" key="1">
    <source>
        <dbReference type="HAMAP-Rule" id="MF_01008"/>
    </source>
</evidence>
<evidence type="ECO:0000255" key="2">
    <source>
        <dbReference type="PROSITE-ProRule" id="PRU01076"/>
    </source>
</evidence>
<proteinExistence type="inferred from homology"/>
<feature type="chain" id="PRO_1000062945" description="Transcriptional regulator MraZ">
    <location>
        <begin position="1"/>
        <end position="150"/>
    </location>
</feature>
<feature type="domain" description="SpoVT-AbrB 1" evidence="2">
    <location>
        <begin position="9"/>
        <end position="54"/>
    </location>
</feature>
<feature type="domain" description="SpoVT-AbrB 2" evidence="2">
    <location>
        <begin position="83"/>
        <end position="126"/>
    </location>
</feature>
<gene>
    <name evidence="1" type="primary">mraZ</name>
    <name type="ordered locus">Sfum_3462</name>
</gene>
<comment type="subunit">
    <text evidence="1">Forms oligomers.</text>
</comment>
<comment type="subcellular location">
    <subcellularLocation>
        <location evidence="1">Cytoplasm</location>
        <location evidence="1">Nucleoid</location>
    </subcellularLocation>
</comment>
<comment type="similarity">
    <text evidence="1">Belongs to the MraZ family.</text>
</comment>
<keyword id="KW-0963">Cytoplasm</keyword>
<keyword id="KW-0238">DNA-binding</keyword>
<keyword id="KW-1185">Reference proteome</keyword>
<keyword id="KW-0677">Repeat</keyword>
<keyword id="KW-0804">Transcription</keyword>
<keyword id="KW-0805">Transcription regulation</keyword>
<accession>A0LNY1</accession>
<dbReference type="EMBL" id="CP000478">
    <property type="protein sequence ID" value="ABK19133.1"/>
    <property type="molecule type" value="Genomic_DNA"/>
</dbReference>
<dbReference type="SMR" id="A0LNY1"/>
<dbReference type="FunCoup" id="A0LNY1">
    <property type="interactions" value="218"/>
</dbReference>
<dbReference type="STRING" id="335543.Sfum_3462"/>
<dbReference type="KEGG" id="sfu:Sfum_3462"/>
<dbReference type="eggNOG" id="COG2001">
    <property type="taxonomic scope" value="Bacteria"/>
</dbReference>
<dbReference type="HOGENOM" id="CLU_107907_0_5_7"/>
<dbReference type="InParanoid" id="A0LNY1"/>
<dbReference type="Proteomes" id="UP000001784">
    <property type="component" value="Chromosome"/>
</dbReference>
<dbReference type="GO" id="GO:0005737">
    <property type="term" value="C:cytoplasm"/>
    <property type="evidence" value="ECO:0007669"/>
    <property type="project" value="UniProtKB-UniRule"/>
</dbReference>
<dbReference type="GO" id="GO:0009295">
    <property type="term" value="C:nucleoid"/>
    <property type="evidence" value="ECO:0007669"/>
    <property type="project" value="UniProtKB-SubCell"/>
</dbReference>
<dbReference type="GO" id="GO:0003700">
    <property type="term" value="F:DNA-binding transcription factor activity"/>
    <property type="evidence" value="ECO:0007669"/>
    <property type="project" value="UniProtKB-UniRule"/>
</dbReference>
<dbReference type="GO" id="GO:0000976">
    <property type="term" value="F:transcription cis-regulatory region binding"/>
    <property type="evidence" value="ECO:0007669"/>
    <property type="project" value="TreeGrafter"/>
</dbReference>
<dbReference type="GO" id="GO:2000143">
    <property type="term" value="P:negative regulation of DNA-templated transcription initiation"/>
    <property type="evidence" value="ECO:0007669"/>
    <property type="project" value="TreeGrafter"/>
</dbReference>
<dbReference type="CDD" id="cd16321">
    <property type="entry name" value="MraZ_C"/>
    <property type="match status" value="1"/>
</dbReference>
<dbReference type="CDD" id="cd16320">
    <property type="entry name" value="MraZ_N"/>
    <property type="match status" value="1"/>
</dbReference>
<dbReference type="Gene3D" id="3.40.1550.20">
    <property type="entry name" value="Transcriptional regulator MraZ domain"/>
    <property type="match status" value="1"/>
</dbReference>
<dbReference type="HAMAP" id="MF_01008">
    <property type="entry name" value="MraZ"/>
    <property type="match status" value="1"/>
</dbReference>
<dbReference type="InterPro" id="IPR003444">
    <property type="entry name" value="MraZ"/>
</dbReference>
<dbReference type="InterPro" id="IPR035644">
    <property type="entry name" value="MraZ_C"/>
</dbReference>
<dbReference type="InterPro" id="IPR020603">
    <property type="entry name" value="MraZ_dom"/>
</dbReference>
<dbReference type="InterPro" id="IPR035642">
    <property type="entry name" value="MraZ_N"/>
</dbReference>
<dbReference type="InterPro" id="IPR038619">
    <property type="entry name" value="MraZ_sf"/>
</dbReference>
<dbReference type="InterPro" id="IPR007159">
    <property type="entry name" value="SpoVT-AbrB_dom"/>
</dbReference>
<dbReference type="InterPro" id="IPR037914">
    <property type="entry name" value="SpoVT-AbrB_sf"/>
</dbReference>
<dbReference type="NCBIfam" id="TIGR00242">
    <property type="entry name" value="division/cell wall cluster transcriptional repressor MraZ"/>
    <property type="match status" value="1"/>
</dbReference>
<dbReference type="PANTHER" id="PTHR34701">
    <property type="entry name" value="TRANSCRIPTIONAL REGULATOR MRAZ"/>
    <property type="match status" value="1"/>
</dbReference>
<dbReference type="PANTHER" id="PTHR34701:SF1">
    <property type="entry name" value="TRANSCRIPTIONAL REGULATOR MRAZ"/>
    <property type="match status" value="1"/>
</dbReference>
<dbReference type="Pfam" id="PF02381">
    <property type="entry name" value="MraZ"/>
    <property type="match status" value="2"/>
</dbReference>
<dbReference type="SUPFAM" id="SSF89447">
    <property type="entry name" value="AbrB/MazE/MraZ-like"/>
    <property type="match status" value="1"/>
</dbReference>
<dbReference type="PROSITE" id="PS51740">
    <property type="entry name" value="SPOVT_ABRB"/>
    <property type="match status" value="2"/>
</dbReference>
<reference key="1">
    <citation type="submission" date="2006-10" db="EMBL/GenBank/DDBJ databases">
        <title>Complete sequence of Syntrophobacter fumaroxidans MPOB.</title>
        <authorList>
            <consortium name="US DOE Joint Genome Institute"/>
            <person name="Copeland A."/>
            <person name="Lucas S."/>
            <person name="Lapidus A."/>
            <person name="Barry K."/>
            <person name="Detter J.C."/>
            <person name="Glavina del Rio T."/>
            <person name="Hammon N."/>
            <person name="Israni S."/>
            <person name="Pitluck S."/>
            <person name="Goltsman E.G."/>
            <person name="Martinez M."/>
            <person name="Schmutz J."/>
            <person name="Larimer F."/>
            <person name="Land M."/>
            <person name="Hauser L."/>
            <person name="Kyrpides N."/>
            <person name="Kim E."/>
            <person name="Boone D.R."/>
            <person name="Brockman F."/>
            <person name="Culley D."/>
            <person name="Ferry J."/>
            <person name="Gunsalus R."/>
            <person name="McInerney M.J."/>
            <person name="Morrison M."/>
            <person name="Plugge C."/>
            <person name="Rohlin L."/>
            <person name="Scholten J."/>
            <person name="Sieber J."/>
            <person name="Stams A.J.M."/>
            <person name="Worm P."/>
            <person name="Henstra A.M."/>
            <person name="Richardson P."/>
        </authorList>
    </citation>
    <scope>NUCLEOTIDE SEQUENCE [LARGE SCALE GENOMIC DNA]</scope>
    <source>
        <strain>DSM 10017 / MPOB</strain>
    </source>
</reference>
<organism>
    <name type="scientific">Syntrophobacter fumaroxidans (strain DSM 10017 / MPOB)</name>
    <dbReference type="NCBI Taxonomy" id="335543"/>
    <lineage>
        <taxon>Bacteria</taxon>
        <taxon>Pseudomonadati</taxon>
        <taxon>Thermodesulfobacteriota</taxon>
        <taxon>Syntrophobacteria</taxon>
        <taxon>Syntrophobacterales</taxon>
        <taxon>Syntrophobacteraceae</taxon>
        <taxon>Syntrophobacter</taxon>
    </lineage>
</organism>
<sequence>MGKPYFRGQSIHRLDAKGRLRIPTKFREVLQNHYTDALVITRMGECLLAYPPEEWEKIENKAREFSQVQPEHRAFMRYFISSAEECEFDNQGRILIPPFLREEANLTQDVLLAGVLTNFEIWNKSTWDAHIKLDKDSYQKIMEFMAGTGL</sequence>
<protein>
    <recommendedName>
        <fullName>Transcriptional regulator MraZ</fullName>
    </recommendedName>
</protein>